<feature type="chain" id="PRO_1000015843" description="Glutamyl-tRNA(Gln) amidotransferase subunit A">
    <location>
        <begin position="1"/>
        <end position="489"/>
    </location>
</feature>
<feature type="active site" description="Charge relay system" evidence="1">
    <location>
        <position position="77"/>
    </location>
</feature>
<feature type="active site" description="Charge relay system" evidence="1">
    <location>
        <position position="152"/>
    </location>
</feature>
<feature type="active site" description="Acyl-ester intermediate" evidence="1">
    <location>
        <position position="176"/>
    </location>
</feature>
<proteinExistence type="inferred from homology"/>
<comment type="function">
    <text evidence="1">Allows the formation of correctly charged Gln-tRNA(Gln) through the transamidation of misacylated Glu-tRNA(Gln) in organisms which lack glutaminyl-tRNA synthetase. The reaction takes place in the presence of glutamine and ATP through an activated gamma-phospho-Glu-tRNA(Gln).</text>
</comment>
<comment type="catalytic activity">
    <reaction evidence="1">
        <text>L-glutamyl-tRNA(Gln) + L-glutamine + ATP + H2O = L-glutaminyl-tRNA(Gln) + L-glutamate + ADP + phosphate + H(+)</text>
        <dbReference type="Rhea" id="RHEA:17521"/>
        <dbReference type="Rhea" id="RHEA-COMP:9681"/>
        <dbReference type="Rhea" id="RHEA-COMP:9684"/>
        <dbReference type="ChEBI" id="CHEBI:15377"/>
        <dbReference type="ChEBI" id="CHEBI:15378"/>
        <dbReference type="ChEBI" id="CHEBI:29985"/>
        <dbReference type="ChEBI" id="CHEBI:30616"/>
        <dbReference type="ChEBI" id="CHEBI:43474"/>
        <dbReference type="ChEBI" id="CHEBI:58359"/>
        <dbReference type="ChEBI" id="CHEBI:78520"/>
        <dbReference type="ChEBI" id="CHEBI:78521"/>
        <dbReference type="ChEBI" id="CHEBI:456216"/>
        <dbReference type="EC" id="6.3.5.7"/>
    </reaction>
</comment>
<comment type="subunit">
    <text evidence="1">Heterotrimer of A, B and C subunits.</text>
</comment>
<comment type="similarity">
    <text evidence="1">Belongs to the amidase family. GatA subfamily.</text>
</comment>
<reference key="1">
    <citation type="journal article" date="2006" name="Proc. Natl. Acad. Sci. U.S.A.">
        <title>Comparative genomics of the lactic acid bacteria.</title>
        <authorList>
            <person name="Makarova K.S."/>
            <person name="Slesarev A."/>
            <person name="Wolf Y.I."/>
            <person name="Sorokin A."/>
            <person name="Mirkin B."/>
            <person name="Koonin E.V."/>
            <person name="Pavlov A."/>
            <person name="Pavlova N."/>
            <person name="Karamychev V."/>
            <person name="Polouchine N."/>
            <person name="Shakhova V."/>
            <person name="Grigoriev I."/>
            <person name="Lou Y."/>
            <person name="Rohksar D."/>
            <person name="Lucas S."/>
            <person name="Huang K."/>
            <person name="Goodstein D.M."/>
            <person name="Hawkins T."/>
            <person name="Plengvidhya V."/>
            <person name="Welker D."/>
            <person name="Hughes J."/>
            <person name="Goh Y."/>
            <person name="Benson A."/>
            <person name="Baldwin K."/>
            <person name="Lee J.-H."/>
            <person name="Diaz-Muniz I."/>
            <person name="Dosti B."/>
            <person name="Smeianov V."/>
            <person name="Wechter W."/>
            <person name="Barabote R."/>
            <person name="Lorca G."/>
            <person name="Altermann E."/>
            <person name="Barrangou R."/>
            <person name="Ganesan B."/>
            <person name="Xie Y."/>
            <person name="Rawsthorne H."/>
            <person name="Tamir D."/>
            <person name="Parker C."/>
            <person name="Breidt F."/>
            <person name="Broadbent J.R."/>
            <person name="Hutkins R."/>
            <person name="O'Sullivan D."/>
            <person name="Steele J."/>
            <person name="Unlu G."/>
            <person name="Saier M.H. Jr."/>
            <person name="Klaenhammer T."/>
            <person name="Richardson P."/>
            <person name="Kozyavkin S."/>
            <person name="Weimer B.C."/>
            <person name="Mills D.A."/>
        </authorList>
    </citation>
    <scope>NUCLEOTIDE SEQUENCE [LARGE SCALE GENOMIC DNA]</scope>
    <source>
        <strain>ATCC 367 / BCRC 12310 / CIP 105137 / JCM 1170 / LMG 11437 / NCIMB 947 / NCTC 947</strain>
    </source>
</reference>
<organism>
    <name type="scientific">Levilactobacillus brevis (strain ATCC 367 / BCRC 12310 / CIP 105137 / JCM 1170 / LMG 11437 / NCIMB 947 / NCTC 947)</name>
    <name type="common">Lactobacillus brevis</name>
    <dbReference type="NCBI Taxonomy" id="387344"/>
    <lineage>
        <taxon>Bacteria</taxon>
        <taxon>Bacillati</taxon>
        <taxon>Bacillota</taxon>
        <taxon>Bacilli</taxon>
        <taxon>Lactobacillales</taxon>
        <taxon>Lactobacillaceae</taxon>
        <taxon>Levilactobacillus</taxon>
    </lineage>
</organism>
<keyword id="KW-0067">ATP-binding</keyword>
<keyword id="KW-0436">Ligase</keyword>
<keyword id="KW-0547">Nucleotide-binding</keyword>
<keyword id="KW-0648">Protein biosynthesis</keyword>
<keyword id="KW-1185">Reference proteome</keyword>
<evidence type="ECO:0000255" key="1">
    <source>
        <dbReference type="HAMAP-Rule" id="MF_00120"/>
    </source>
</evidence>
<accession>Q03Q16</accession>
<protein>
    <recommendedName>
        <fullName evidence="1">Glutamyl-tRNA(Gln) amidotransferase subunit A</fullName>
        <shortName evidence="1">Glu-ADT subunit A</shortName>
        <ecNumber evidence="1">6.3.5.7</ecNumber>
    </recommendedName>
</protein>
<sequence>MDYFKTDLASLHADLVAKKISARELTQATFDNIKTTDAQVDAFLTLNEDAALKQATKIDEQGVATDQPLAGIPVALKDNIVTKGLKTTAASKMLANFNPVYDATVTEKLAQAQMITVGKTNLDEFAMGGSTENSAFKTTKNAWDYTKVPGGSSGGSAAAVASGQVLAALGSDTGGSIRQPAAFNGIVGLKPTYGRVSRWGLIAFGSSLDQIGPMTRSVKDNATMLSAIAGHDEHDLTSSTQPVPDFAADLTDATSVKGMRIGLPKEFLADGVADDVKQAILAAADTYRQLGATVDEVSLPHNKYGVAAYYIIGSSEASSNLQRFDGIRYGHRADDVKNLEDVYVKSRSEGFGDEVKRRIMLGTFSLSAGFYDAYFLKAAKVRTVIMNDFKAVLKDHDFIMGPVAPTPAFGIGDEIKDPITMYMNDVLTIPVNLAGLPGLSLPAGFSQGLPVGMQLIGRPFDESTLYKAGYAFEQNTDFHLQVPTLGGQH</sequence>
<name>GATA_LEVBA</name>
<dbReference type="EC" id="6.3.5.7" evidence="1"/>
<dbReference type="EMBL" id="CP000416">
    <property type="protein sequence ID" value="ABJ64706.1"/>
    <property type="molecule type" value="Genomic_DNA"/>
</dbReference>
<dbReference type="RefSeq" id="WP_011668331.1">
    <property type="nucleotide sequence ID" value="NC_008497.1"/>
</dbReference>
<dbReference type="SMR" id="Q03Q16"/>
<dbReference type="STRING" id="387344.LVIS_1630"/>
<dbReference type="GeneID" id="56993476"/>
<dbReference type="KEGG" id="lbr:LVIS_1630"/>
<dbReference type="eggNOG" id="COG0154">
    <property type="taxonomic scope" value="Bacteria"/>
</dbReference>
<dbReference type="HOGENOM" id="CLU_009600_0_3_9"/>
<dbReference type="Proteomes" id="UP000001652">
    <property type="component" value="Chromosome"/>
</dbReference>
<dbReference type="GO" id="GO:0030956">
    <property type="term" value="C:glutamyl-tRNA(Gln) amidotransferase complex"/>
    <property type="evidence" value="ECO:0007669"/>
    <property type="project" value="InterPro"/>
</dbReference>
<dbReference type="GO" id="GO:0005524">
    <property type="term" value="F:ATP binding"/>
    <property type="evidence" value="ECO:0007669"/>
    <property type="project" value="UniProtKB-KW"/>
</dbReference>
<dbReference type="GO" id="GO:0050567">
    <property type="term" value="F:glutaminyl-tRNA synthase (glutamine-hydrolyzing) activity"/>
    <property type="evidence" value="ECO:0007669"/>
    <property type="project" value="UniProtKB-UniRule"/>
</dbReference>
<dbReference type="GO" id="GO:0006412">
    <property type="term" value="P:translation"/>
    <property type="evidence" value="ECO:0007669"/>
    <property type="project" value="UniProtKB-UniRule"/>
</dbReference>
<dbReference type="Gene3D" id="3.90.1300.10">
    <property type="entry name" value="Amidase signature (AS) domain"/>
    <property type="match status" value="1"/>
</dbReference>
<dbReference type="HAMAP" id="MF_00120">
    <property type="entry name" value="GatA"/>
    <property type="match status" value="1"/>
</dbReference>
<dbReference type="InterPro" id="IPR000120">
    <property type="entry name" value="Amidase"/>
</dbReference>
<dbReference type="InterPro" id="IPR020556">
    <property type="entry name" value="Amidase_CS"/>
</dbReference>
<dbReference type="InterPro" id="IPR023631">
    <property type="entry name" value="Amidase_dom"/>
</dbReference>
<dbReference type="InterPro" id="IPR036928">
    <property type="entry name" value="AS_sf"/>
</dbReference>
<dbReference type="InterPro" id="IPR004412">
    <property type="entry name" value="GatA"/>
</dbReference>
<dbReference type="NCBIfam" id="TIGR00132">
    <property type="entry name" value="gatA"/>
    <property type="match status" value="1"/>
</dbReference>
<dbReference type="PANTHER" id="PTHR11895:SF151">
    <property type="entry name" value="GLUTAMYL-TRNA(GLN) AMIDOTRANSFERASE SUBUNIT A"/>
    <property type="match status" value="1"/>
</dbReference>
<dbReference type="PANTHER" id="PTHR11895">
    <property type="entry name" value="TRANSAMIDASE"/>
    <property type="match status" value="1"/>
</dbReference>
<dbReference type="Pfam" id="PF01425">
    <property type="entry name" value="Amidase"/>
    <property type="match status" value="1"/>
</dbReference>
<dbReference type="SUPFAM" id="SSF75304">
    <property type="entry name" value="Amidase signature (AS) enzymes"/>
    <property type="match status" value="1"/>
</dbReference>
<dbReference type="PROSITE" id="PS00571">
    <property type="entry name" value="AMIDASES"/>
    <property type="match status" value="1"/>
</dbReference>
<gene>
    <name evidence="1" type="primary">gatA</name>
    <name type="ordered locus">LVIS_1630</name>
</gene>